<reference key="1">
    <citation type="submission" date="2007-06" db="EMBL/GenBank/DDBJ databases">
        <title>Complete sequence of Sinorhizobium medicae WSM419 chromosome.</title>
        <authorList>
            <consortium name="US DOE Joint Genome Institute"/>
            <person name="Copeland A."/>
            <person name="Lucas S."/>
            <person name="Lapidus A."/>
            <person name="Barry K."/>
            <person name="Glavina del Rio T."/>
            <person name="Dalin E."/>
            <person name="Tice H."/>
            <person name="Pitluck S."/>
            <person name="Chain P."/>
            <person name="Malfatti S."/>
            <person name="Shin M."/>
            <person name="Vergez L."/>
            <person name="Schmutz J."/>
            <person name="Larimer F."/>
            <person name="Land M."/>
            <person name="Hauser L."/>
            <person name="Kyrpides N."/>
            <person name="Mikhailova N."/>
            <person name="Reeve W.G."/>
            <person name="Richardson P."/>
        </authorList>
    </citation>
    <scope>NUCLEOTIDE SEQUENCE [LARGE SCALE GENOMIC DNA]</scope>
    <source>
        <strain>WSM419</strain>
    </source>
</reference>
<feature type="chain" id="PRO_1000066531" description="FMN-dependent NADH:quinone oxidoreductase">
    <location>
        <begin position="1"/>
        <end position="206"/>
    </location>
</feature>
<feature type="binding site" evidence="1">
    <location>
        <begin position="15"/>
        <end position="17"/>
    </location>
    <ligand>
        <name>FMN</name>
        <dbReference type="ChEBI" id="CHEBI:58210"/>
    </ligand>
</feature>
<feature type="binding site" evidence="1">
    <location>
        <begin position="94"/>
        <end position="97"/>
    </location>
    <ligand>
        <name>FMN</name>
        <dbReference type="ChEBI" id="CHEBI:58210"/>
    </ligand>
</feature>
<feature type="binding site" evidence="1">
    <location>
        <begin position="138"/>
        <end position="141"/>
    </location>
    <ligand>
        <name>FMN</name>
        <dbReference type="ChEBI" id="CHEBI:58210"/>
    </ligand>
</feature>
<keyword id="KW-0285">Flavoprotein</keyword>
<keyword id="KW-0288">FMN</keyword>
<keyword id="KW-0520">NAD</keyword>
<keyword id="KW-0560">Oxidoreductase</keyword>
<evidence type="ECO:0000255" key="1">
    <source>
        <dbReference type="HAMAP-Rule" id="MF_01216"/>
    </source>
</evidence>
<comment type="function">
    <text evidence="1">Quinone reductase that provides resistance to thiol-specific stress caused by electrophilic quinones.</text>
</comment>
<comment type="function">
    <text evidence="1">Also exhibits azoreductase activity. Catalyzes the reductive cleavage of the azo bond in aromatic azo compounds to the corresponding amines.</text>
</comment>
<comment type="catalytic activity">
    <reaction evidence="1">
        <text>2 a quinone + NADH + H(+) = 2 a 1,4-benzosemiquinone + NAD(+)</text>
        <dbReference type="Rhea" id="RHEA:65952"/>
        <dbReference type="ChEBI" id="CHEBI:15378"/>
        <dbReference type="ChEBI" id="CHEBI:57540"/>
        <dbReference type="ChEBI" id="CHEBI:57945"/>
        <dbReference type="ChEBI" id="CHEBI:132124"/>
        <dbReference type="ChEBI" id="CHEBI:134225"/>
    </reaction>
</comment>
<comment type="catalytic activity">
    <reaction evidence="1">
        <text>N,N-dimethyl-1,4-phenylenediamine + anthranilate + 2 NAD(+) = 2-(4-dimethylaminophenyl)diazenylbenzoate + 2 NADH + 2 H(+)</text>
        <dbReference type="Rhea" id="RHEA:55872"/>
        <dbReference type="ChEBI" id="CHEBI:15378"/>
        <dbReference type="ChEBI" id="CHEBI:15783"/>
        <dbReference type="ChEBI" id="CHEBI:16567"/>
        <dbReference type="ChEBI" id="CHEBI:57540"/>
        <dbReference type="ChEBI" id="CHEBI:57945"/>
        <dbReference type="ChEBI" id="CHEBI:71579"/>
        <dbReference type="EC" id="1.7.1.17"/>
    </reaction>
</comment>
<comment type="cofactor">
    <cofactor evidence="1">
        <name>FMN</name>
        <dbReference type="ChEBI" id="CHEBI:58210"/>
    </cofactor>
    <text evidence="1">Binds 1 FMN per subunit.</text>
</comment>
<comment type="subunit">
    <text evidence="1">Homodimer.</text>
</comment>
<comment type="similarity">
    <text evidence="1">Belongs to the azoreductase type 1 family.</text>
</comment>
<name>AZOR_SINMW</name>
<dbReference type="EC" id="1.6.5.-" evidence="1"/>
<dbReference type="EC" id="1.7.1.17" evidence="1"/>
<dbReference type="EMBL" id="CP000738">
    <property type="protein sequence ID" value="ABR59819.1"/>
    <property type="molecule type" value="Genomic_DNA"/>
</dbReference>
<dbReference type="RefSeq" id="WP_011975155.1">
    <property type="nucleotide sequence ID" value="NC_009636.1"/>
</dbReference>
<dbReference type="RefSeq" id="YP_001326654.1">
    <property type="nucleotide sequence ID" value="NC_009636.1"/>
</dbReference>
<dbReference type="SMR" id="A6U839"/>
<dbReference type="STRING" id="366394.Smed_0966"/>
<dbReference type="KEGG" id="smd:Smed_0966"/>
<dbReference type="PATRIC" id="fig|366394.8.peg.4083"/>
<dbReference type="eggNOG" id="COG1182">
    <property type="taxonomic scope" value="Bacteria"/>
</dbReference>
<dbReference type="HOGENOM" id="CLU_088964_0_0_5"/>
<dbReference type="OrthoDB" id="9787136at2"/>
<dbReference type="Proteomes" id="UP000001108">
    <property type="component" value="Chromosome"/>
</dbReference>
<dbReference type="GO" id="GO:0009055">
    <property type="term" value="F:electron transfer activity"/>
    <property type="evidence" value="ECO:0007669"/>
    <property type="project" value="UniProtKB-UniRule"/>
</dbReference>
<dbReference type="GO" id="GO:0010181">
    <property type="term" value="F:FMN binding"/>
    <property type="evidence" value="ECO:0007669"/>
    <property type="project" value="UniProtKB-UniRule"/>
</dbReference>
<dbReference type="GO" id="GO:0016652">
    <property type="term" value="F:oxidoreductase activity, acting on NAD(P)H as acceptor"/>
    <property type="evidence" value="ECO:0007669"/>
    <property type="project" value="UniProtKB-UniRule"/>
</dbReference>
<dbReference type="GO" id="GO:0016655">
    <property type="term" value="F:oxidoreductase activity, acting on NAD(P)H, quinone or similar compound as acceptor"/>
    <property type="evidence" value="ECO:0007669"/>
    <property type="project" value="InterPro"/>
</dbReference>
<dbReference type="Gene3D" id="3.40.50.360">
    <property type="match status" value="1"/>
</dbReference>
<dbReference type="HAMAP" id="MF_01216">
    <property type="entry name" value="Azoreductase_type1"/>
    <property type="match status" value="1"/>
</dbReference>
<dbReference type="InterPro" id="IPR003680">
    <property type="entry name" value="Flavodoxin_fold"/>
</dbReference>
<dbReference type="InterPro" id="IPR029039">
    <property type="entry name" value="Flavoprotein-like_sf"/>
</dbReference>
<dbReference type="InterPro" id="IPR050104">
    <property type="entry name" value="FMN-dep_NADH:Q_OxRdtase_AzoR1"/>
</dbReference>
<dbReference type="InterPro" id="IPR023048">
    <property type="entry name" value="NADH:quinone_OxRdtase_FMN_depd"/>
</dbReference>
<dbReference type="PANTHER" id="PTHR43741">
    <property type="entry name" value="FMN-DEPENDENT NADH-AZOREDUCTASE 1"/>
    <property type="match status" value="1"/>
</dbReference>
<dbReference type="PANTHER" id="PTHR43741:SF4">
    <property type="entry name" value="FMN-DEPENDENT NADH:QUINONE OXIDOREDUCTASE"/>
    <property type="match status" value="1"/>
</dbReference>
<dbReference type="Pfam" id="PF02525">
    <property type="entry name" value="Flavodoxin_2"/>
    <property type="match status" value="1"/>
</dbReference>
<dbReference type="SUPFAM" id="SSF52218">
    <property type="entry name" value="Flavoproteins"/>
    <property type="match status" value="1"/>
</dbReference>
<organism>
    <name type="scientific">Sinorhizobium medicae (strain WSM419)</name>
    <name type="common">Ensifer medicae</name>
    <dbReference type="NCBI Taxonomy" id="366394"/>
    <lineage>
        <taxon>Bacteria</taxon>
        <taxon>Pseudomonadati</taxon>
        <taxon>Pseudomonadota</taxon>
        <taxon>Alphaproteobacteria</taxon>
        <taxon>Hyphomicrobiales</taxon>
        <taxon>Rhizobiaceae</taxon>
        <taxon>Sinorhizobium/Ensifer group</taxon>
        <taxon>Sinorhizobium</taxon>
    </lineage>
</organism>
<gene>
    <name evidence="1" type="primary">azoR</name>
    <name type="ordered locus">Smed_0966</name>
</gene>
<sequence>MKILHIDSGILGEHSVSRRLTAAIVSQIKADRPDADITYRDLASERVPHLTGAQIMAPADLEGVDPDLAADVRIGRQMLEEFLAAETVVVGAPMYNFSIPSQLKAWIDRLAVAGKTFRYSEAGAEGLAKGKKVIVASTRGGHYSVAPASAMDHQETYLRSVFGFFGITDIEFIRAEGLNLGADQKQFAIAEAEKTIAEGNVFKLAS</sequence>
<proteinExistence type="inferred from homology"/>
<accession>A6U839</accession>
<protein>
    <recommendedName>
        <fullName evidence="1">FMN-dependent NADH:quinone oxidoreductase</fullName>
        <ecNumber evidence="1">1.6.5.-</ecNumber>
    </recommendedName>
    <alternativeName>
        <fullName evidence="1">Azo-dye reductase</fullName>
    </alternativeName>
    <alternativeName>
        <fullName evidence="1">FMN-dependent NADH-azo compound oxidoreductase</fullName>
    </alternativeName>
    <alternativeName>
        <fullName evidence="1">FMN-dependent NADH-azoreductase</fullName>
        <ecNumber evidence="1">1.7.1.17</ecNumber>
    </alternativeName>
</protein>